<keyword id="KW-0963">Cytoplasm</keyword>
<keyword id="KW-0285">Flavoprotein</keyword>
<keyword id="KW-0288">FMN</keyword>
<keyword id="KW-0520">NAD</keyword>
<keyword id="KW-0560">Oxidoreductase</keyword>
<keyword id="KW-0665">Pyrimidine biosynthesis</keyword>
<reference key="1">
    <citation type="submission" date="2008-10" db="EMBL/GenBank/DDBJ databases">
        <title>Genome sequence of Bacillus cereus B4264.</title>
        <authorList>
            <person name="Dodson R.J."/>
            <person name="Durkin A.S."/>
            <person name="Rosovitz M.J."/>
            <person name="Rasko D.A."/>
            <person name="Hoffmaster A."/>
            <person name="Ravel J."/>
            <person name="Sutton G."/>
        </authorList>
    </citation>
    <scope>NUCLEOTIDE SEQUENCE [LARGE SCALE GENOMIC DNA]</scope>
    <source>
        <strain>B4264</strain>
    </source>
</reference>
<proteinExistence type="inferred from homology"/>
<gene>
    <name type="primary">pyrD</name>
    <name type="ordered locus">BCB4264_A3982</name>
</gene>
<accession>B7H6M0</accession>
<protein>
    <recommendedName>
        <fullName>Dihydroorotate dehydrogenase B (NAD(+)), catalytic subunit</fullName>
        <shortName>DHOD B</shortName>
        <shortName>DHODase B</shortName>
        <shortName>DHOdehase B</shortName>
        <ecNumber>1.3.1.14</ecNumber>
    </recommendedName>
    <alternativeName>
        <fullName>Dihydroorotate oxidase B</fullName>
    </alternativeName>
    <alternativeName>
        <fullName>Orotate reductase (NADH)</fullName>
    </alternativeName>
</protein>
<name>PYRDB_BACC4</name>
<dbReference type="EC" id="1.3.1.14"/>
<dbReference type="EMBL" id="CP001176">
    <property type="protein sequence ID" value="ACK63712.1"/>
    <property type="molecule type" value="Genomic_DNA"/>
</dbReference>
<dbReference type="RefSeq" id="WP_001081051.1">
    <property type="nucleotide sequence ID" value="NC_011725.1"/>
</dbReference>
<dbReference type="SMR" id="B7H6M0"/>
<dbReference type="KEGG" id="bcb:BCB4264_A3982"/>
<dbReference type="HOGENOM" id="CLU_042042_0_0_9"/>
<dbReference type="UniPathway" id="UPA00070">
    <property type="reaction ID" value="UER00945"/>
</dbReference>
<dbReference type="Proteomes" id="UP000007096">
    <property type="component" value="Chromosome"/>
</dbReference>
<dbReference type="GO" id="GO:0005737">
    <property type="term" value="C:cytoplasm"/>
    <property type="evidence" value="ECO:0007669"/>
    <property type="project" value="UniProtKB-SubCell"/>
</dbReference>
<dbReference type="GO" id="GO:0004589">
    <property type="term" value="F:dihydroorotate dehydrogenase (NAD+) activity"/>
    <property type="evidence" value="ECO:0007669"/>
    <property type="project" value="UniProtKB-EC"/>
</dbReference>
<dbReference type="GO" id="GO:0006207">
    <property type="term" value="P:'de novo' pyrimidine nucleobase biosynthetic process"/>
    <property type="evidence" value="ECO:0007669"/>
    <property type="project" value="InterPro"/>
</dbReference>
<dbReference type="GO" id="GO:0044205">
    <property type="term" value="P:'de novo' UMP biosynthetic process"/>
    <property type="evidence" value="ECO:0007669"/>
    <property type="project" value="UniProtKB-UniRule"/>
</dbReference>
<dbReference type="CDD" id="cd04740">
    <property type="entry name" value="DHOD_1B_like"/>
    <property type="match status" value="1"/>
</dbReference>
<dbReference type="FunFam" id="3.20.20.70:FF:000069">
    <property type="entry name" value="Dihydroorotate dehydrogenase"/>
    <property type="match status" value="1"/>
</dbReference>
<dbReference type="Gene3D" id="3.20.20.70">
    <property type="entry name" value="Aldolase class I"/>
    <property type="match status" value="1"/>
</dbReference>
<dbReference type="HAMAP" id="MF_00224">
    <property type="entry name" value="DHO_dh_type1"/>
    <property type="match status" value="1"/>
</dbReference>
<dbReference type="InterPro" id="IPR013785">
    <property type="entry name" value="Aldolase_TIM"/>
</dbReference>
<dbReference type="InterPro" id="IPR050074">
    <property type="entry name" value="DHO_dehydrogenase"/>
</dbReference>
<dbReference type="InterPro" id="IPR033888">
    <property type="entry name" value="DHOD_1B"/>
</dbReference>
<dbReference type="InterPro" id="IPR024920">
    <property type="entry name" value="Dihydroorotate_DH_1"/>
</dbReference>
<dbReference type="InterPro" id="IPR012135">
    <property type="entry name" value="Dihydroorotate_DH_1_2"/>
</dbReference>
<dbReference type="InterPro" id="IPR005720">
    <property type="entry name" value="Dihydroorotate_DH_cat"/>
</dbReference>
<dbReference type="InterPro" id="IPR001295">
    <property type="entry name" value="Dihydroorotate_DH_CS"/>
</dbReference>
<dbReference type="InterPro" id="IPR049622">
    <property type="entry name" value="Dihydroorotate_DH_I"/>
</dbReference>
<dbReference type="NCBIfam" id="NF005574">
    <property type="entry name" value="PRK07259.1"/>
    <property type="match status" value="1"/>
</dbReference>
<dbReference type="NCBIfam" id="TIGR01037">
    <property type="entry name" value="pyrD_sub1_fam"/>
    <property type="match status" value="1"/>
</dbReference>
<dbReference type="PANTHER" id="PTHR48109:SF1">
    <property type="entry name" value="DIHYDROOROTATE DEHYDROGENASE (FUMARATE)"/>
    <property type="match status" value="1"/>
</dbReference>
<dbReference type="PANTHER" id="PTHR48109">
    <property type="entry name" value="DIHYDROOROTATE DEHYDROGENASE (QUINONE), MITOCHONDRIAL-RELATED"/>
    <property type="match status" value="1"/>
</dbReference>
<dbReference type="Pfam" id="PF01180">
    <property type="entry name" value="DHO_dh"/>
    <property type="match status" value="1"/>
</dbReference>
<dbReference type="PIRSF" id="PIRSF000164">
    <property type="entry name" value="DHO_oxidase"/>
    <property type="match status" value="1"/>
</dbReference>
<dbReference type="SUPFAM" id="SSF51395">
    <property type="entry name" value="FMN-linked oxidoreductases"/>
    <property type="match status" value="1"/>
</dbReference>
<dbReference type="PROSITE" id="PS00911">
    <property type="entry name" value="DHODEHASE_1"/>
    <property type="match status" value="1"/>
</dbReference>
<dbReference type="PROSITE" id="PS00912">
    <property type="entry name" value="DHODEHASE_2"/>
    <property type="match status" value="1"/>
</dbReference>
<comment type="function">
    <text evidence="1">Catalyzes the conversion of dihydroorotate to orotate with NAD(+) as electron acceptor.</text>
</comment>
<comment type="catalytic activity">
    <reaction>
        <text>(S)-dihydroorotate + NAD(+) = orotate + NADH + H(+)</text>
        <dbReference type="Rhea" id="RHEA:13513"/>
        <dbReference type="ChEBI" id="CHEBI:15378"/>
        <dbReference type="ChEBI" id="CHEBI:30839"/>
        <dbReference type="ChEBI" id="CHEBI:30864"/>
        <dbReference type="ChEBI" id="CHEBI:57540"/>
        <dbReference type="ChEBI" id="CHEBI:57945"/>
        <dbReference type="EC" id="1.3.1.14"/>
    </reaction>
</comment>
<comment type="cofactor">
    <cofactor evidence="1">
        <name>FMN</name>
        <dbReference type="ChEBI" id="CHEBI:58210"/>
    </cofactor>
    <text evidence="1">Binds 1 FMN per subunit.</text>
</comment>
<comment type="pathway">
    <text>Pyrimidine metabolism; UMP biosynthesis via de novo pathway; orotate from (S)-dihydroorotate (NAD(+) route): step 1/1.</text>
</comment>
<comment type="subunit">
    <text evidence="1">Heterotetramer of 2 PyrK and 2 PyrD type B subunits.</text>
</comment>
<comment type="subcellular location">
    <subcellularLocation>
        <location evidence="1">Cytoplasm</location>
    </subcellularLocation>
</comment>
<comment type="similarity">
    <text evidence="2">Belongs to the dihydroorotate dehydrogenase family. Type 1 subfamily.</text>
</comment>
<organism>
    <name type="scientific">Bacillus cereus (strain B4264)</name>
    <dbReference type="NCBI Taxonomy" id="405532"/>
    <lineage>
        <taxon>Bacteria</taxon>
        <taxon>Bacillati</taxon>
        <taxon>Bacillota</taxon>
        <taxon>Bacilli</taxon>
        <taxon>Bacillales</taxon>
        <taxon>Bacillaceae</taxon>
        <taxon>Bacillus</taxon>
        <taxon>Bacillus cereus group</taxon>
    </lineage>
</organism>
<sequence length="309" mass="32963">MNRLQVELPGLSLKNPIIPASGCFGFGREYAQFYDLSVLGSIMIKATTEQPRYGNPTPRVAETPGGMLNAIGLQNPGLDKVMNSELPWLEQFDLPIIANVAGSQAEDYVAVAKEISKAPNVHALELNISCPNVKTGGIAFGTNPEIAADLTKRVKEVSEVPVYVKLSPNVANIVEIAKAIETAGADGLTMINTLLGMRLDLKTAKPILANRTGGLSGPAIKPVAIRMVHEVSQAVNIPIIGMGGIETAEDVIEFFYAGASAVAVGTANFIDPFVCPTIIEELPALLDELGFDHISECQGRSWKQTCHSR</sequence>
<evidence type="ECO:0000250" key="1"/>
<evidence type="ECO:0000305" key="2"/>
<feature type="chain" id="PRO_1000195044" description="Dihydroorotate dehydrogenase B (NAD(+)), catalytic subunit">
    <location>
        <begin position="1"/>
        <end position="309"/>
    </location>
</feature>
<feature type="active site" description="Nucleophile">
    <location>
        <position position="130"/>
    </location>
</feature>
<feature type="binding site" evidence="1">
    <location>
        <position position="21"/>
    </location>
    <ligand>
        <name>FMN</name>
        <dbReference type="ChEBI" id="CHEBI:58210"/>
    </ligand>
</feature>
<feature type="binding site" evidence="1">
    <location>
        <begin position="45"/>
        <end position="46"/>
    </location>
    <ligand>
        <name>FMN</name>
        <dbReference type="ChEBI" id="CHEBI:58210"/>
    </ligand>
</feature>
<feature type="binding site" evidence="1">
    <location>
        <position position="45"/>
    </location>
    <ligand>
        <name>substrate</name>
    </ligand>
</feature>
<feature type="binding site" evidence="1">
    <location>
        <begin position="69"/>
        <end position="73"/>
    </location>
    <ligand>
        <name>substrate</name>
    </ligand>
</feature>
<feature type="binding site" evidence="1">
    <location>
        <position position="99"/>
    </location>
    <ligand>
        <name>FMN</name>
        <dbReference type="ChEBI" id="CHEBI:58210"/>
    </ligand>
</feature>
<feature type="binding site" evidence="1">
    <location>
        <position position="127"/>
    </location>
    <ligand>
        <name>FMN</name>
        <dbReference type="ChEBI" id="CHEBI:58210"/>
    </ligand>
</feature>
<feature type="binding site" evidence="1">
    <location>
        <position position="127"/>
    </location>
    <ligand>
        <name>substrate</name>
    </ligand>
</feature>
<feature type="binding site" evidence="1">
    <location>
        <position position="165"/>
    </location>
    <ligand>
        <name>FMN</name>
        <dbReference type="ChEBI" id="CHEBI:58210"/>
    </ligand>
</feature>
<feature type="binding site" evidence="1">
    <location>
        <position position="191"/>
    </location>
    <ligand>
        <name>FMN</name>
        <dbReference type="ChEBI" id="CHEBI:58210"/>
    </ligand>
</feature>
<feature type="binding site" evidence="1">
    <location>
        <begin position="192"/>
        <end position="193"/>
    </location>
    <ligand>
        <name>substrate</name>
    </ligand>
</feature>
<feature type="binding site" evidence="1">
    <location>
        <position position="217"/>
    </location>
    <ligand>
        <name>FMN</name>
        <dbReference type="ChEBI" id="CHEBI:58210"/>
    </ligand>
</feature>
<feature type="binding site" evidence="1">
    <location>
        <begin position="243"/>
        <end position="244"/>
    </location>
    <ligand>
        <name>FMN</name>
        <dbReference type="ChEBI" id="CHEBI:58210"/>
    </ligand>
</feature>
<feature type="binding site" evidence="1">
    <location>
        <begin position="265"/>
        <end position="266"/>
    </location>
    <ligand>
        <name>FMN</name>
        <dbReference type="ChEBI" id="CHEBI:58210"/>
    </ligand>
</feature>